<reference key="1">
    <citation type="online journal article" date="1997" name="Plant Gene Register">
        <title>Isolation and sequence analysis of a cDNA encoding a ribosome-associated p40 protein from soybean.</title>
        <authorList>
            <person name="Staswick P.E."/>
        </authorList>
        <locator>PGR97-153</locator>
    </citation>
    <scope>NUCLEOTIDE SEQUENCE [MRNA]</scope>
    <source>
        <strain>cv. Williams 82</strain>
        <tissue>Epicotyl</tissue>
    </source>
</reference>
<comment type="function">
    <text evidence="1">Required for the assembly and/or stability of the 40S ribosomal subunit. Required for the processing of the 20S rRNA-precursor to mature 18S rRNA in a late step of the maturation of 40S ribosomal subunits.</text>
</comment>
<comment type="subunit">
    <text evidence="1">Component of the small ribosomal subunit. Mature ribosomes consist of a small (40S) and a large (60S) subunit. The 40S subunit contains about 33 different proteins and 1 molecule of RNA (18S). The 60S subunit contains about 49 different proteins and 3 molecules of RNA (25S, 5.8S and 5S). Interacts with ribosomal protein S21.</text>
</comment>
<comment type="subcellular location">
    <subcellularLocation>
        <location>Cytoplasm</location>
    </subcellularLocation>
</comment>
<comment type="similarity">
    <text evidence="1">Belongs to the universal ribosomal protein uS2 family.</text>
</comment>
<keyword id="KW-0963">Cytoplasm</keyword>
<keyword id="KW-1185">Reference proteome</keyword>
<keyword id="KW-0687">Ribonucleoprotein</keyword>
<keyword id="KW-0689">Ribosomal protein</keyword>
<sequence length="310" mass="33906">MATATNAAAAPPRQLSQKEADIQMMLAADVHLGTKNCDFQMERYIFKRRNDGIYIINLGKTWEKLQLAARVIVAIENPQDIIVQSARPYGQRAVLKFAQYTGAHAIAGRHTPGTFTNQLQTSFSEPRLLILTDPRTDHQPIKEAALGNIPTIAFCDTDSPMRYVDIGIPANNKGKHSIGCLFWLLARMVLQMRGTIRPGLKWDVMVDLFFYREPEEAKQQEEEEAPAVDYAITDFNAGAIAADGQWPGTIDQSWSDAVPQPIPAVPGVNWGAPAEAPAAAGGDWGEAVPPPQQIPVPPSGIDTVQPSGWD</sequence>
<name>RSSA_SOYBN</name>
<dbReference type="EMBL" id="AF020553">
    <property type="protein sequence ID" value="AAB82659.1"/>
    <property type="molecule type" value="mRNA"/>
</dbReference>
<dbReference type="PIR" id="T05733">
    <property type="entry name" value="T05733"/>
</dbReference>
<dbReference type="RefSeq" id="NP_001237424.1">
    <property type="nucleotide sequence ID" value="NM_001250495.1"/>
</dbReference>
<dbReference type="SMR" id="O22518"/>
<dbReference type="FunCoup" id="O22518">
    <property type="interactions" value="5423"/>
</dbReference>
<dbReference type="STRING" id="3847.O22518"/>
<dbReference type="PaxDb" id="3847-GLYMA07G04890.1"/>
<dbReference type="ProMEX" id="O22518"/>
<dbReference type="EnsemblPlants" id="KRH47681">
    <property type="protein sequence ID" value="KRH47681"/>
    <property type="gene ID" value="GLYMA_07G043800"/>
</dbReference>
<dbReference type="GeneID" id="548014"/>
<dbReference type="Gramene" id="KRH47681">
    <property type="protein sequence ID" value="KRH47681"/>
    <property type="gene ID" value="GLYMA_07G043800"/>
</dbReference>
<dbReference type="KEGG" id="gmx:548014"/>
<dbReference type="eggNOG" id="KOG0830">
    <property type="taxonomic scope" value="Eukaryota"/>
</dbReference>
<dbReference type="HOGENOM" id="CLU_058171_0_0_1"/>
<dbReference type="InParanoid" id="O22518"/>
<dbReference type="OrthoDB" id="414863at2759"/>
<dbReference type="Proteomes" id="UP000008827">
    <property type="component" value="Chromosome 7"/>
</dbReference>
<dbReference type="GO" id="GO:0022627">
    <property type="term" value="C:cytosolic small ribosomal subunit"/>
    <property type="evidence" value="ECO:0000318"/>
    <property type="project" value="GO_Central"/>
</dbReference>
<dbReference type="GO" id="GO:0003735">
    <property type="term" value="F:structural constituent of ribosome"/>
    <property type="evidence" value="ECO:0000318"/>
    <property type="project" value="GO_Central"/>
</dbReference>
<dbReference type="GO" id="GO:0002181">
    <property type="term" value="P:cytoplasmic translation"/>
    <property type="evidence" value="ECO:0000318"/>
    <property type="project" value="GO_Central"/>
</dbReference>
<dbReference type="GO" id="GO:0000028">
    <property type="term" value="P:ribosomal small subunit assembly"/>
    <property type="evidence" value="ECO:0000318"/>
    <property type="project" value="GO_Central"/>
</dbReference>
<dbReference type="CDD" id="cd01425">
    <property type="entry name" value="RPS2"/>
    <property type="match status" value="1"/>
</dbReference>
<dbReference type="FunFam" id="3.40.50.10490:FF:000017">
    <property type="entry name" value="40S ribosomal protein SA"/>
    <property type="match status" value="1"/>
</dbReference>
<dbReference type="Gene3D" id="3.40.50.10490">
    <property type="entry name" value="Glucose-6-phosphate isomerase like protein, domain 1"/>
    <property type="match status" value="1"/>
</dbReference>
<dbReference type="HAMAP" id="MF_03015">
    <property type="entry name" value="Ribosomal_S2_euk"/>
    <property type="match status" value="1"/>
</dbReference>
<dbReference type="InterPro" id="IPR001865">
    <property type="entry name" value="Ribosomal_uS2"/>
</dbReference>
<dbReference type="InterPro" id="IPR018130">
    <property type="entry name" value="Ribosomal_uS2_CS"/>
</dbReference>
<dbReference type="InterPro" id="IPR027498">
    <property type="entry name" value="Ribosomal_uS2_euk"/>
</dbReference>
<dbReference type="InterPro" id="IPR005707">
    <property type="entry name" value="Ribosomal_uS2_euk/arc"/>
</dbReference>
<dbReference type="InterPro" id="IPR023591">
    <property type="entry name" value="Ribosomal_uS2_flav_dom_sf"/>
</dbReference>
<dbReference type="NCBIfam" id="TIGR01012">
    <property type="entry name" value="uS2_euk_arch"/>
    <property type="match status" value="1"/>
</dbReference>
<dbReference type="PANTHER" id="PTHR11489">
    <property type="entry name" value="40S RIBOSOMAL PROTEIN SA"/>
    <property type="match status" value="1"/>
</dbReference>
<dbReference type="Pfam" id="PF00318">
    <property type="entry name" value="Ribosomal_S2"/>
    <property type="match status" value="2"/>
</dbReference>
<dbReference type="PRINTS" id="PR00395">
    <property type="entry name" value="RIBOSOMALS2"/>
</dbReference>
<dbReference type="SUPFAM" id="SSF52313">
    <property type="entry name" value="Ribosomal protein S2"/>
    <property type="match status" value="1"/>
</dbReference>
<dbReference type="PROSITE" id="PS00963">
    <property type="entry name" value="RIBOSOMAL_S2_2"/>
    <property type="match status" value="1"/>
</dbReference>
<accession>O22518</accession>
<feature type="chain" id="PRO_0000134351" description="Small ribosomal subunit protein uS2">
    <location>
        <begin position="1"/>
        <end position="310"/>
    </location>
</feature>
<feature type="region of interest" description="Disordered" evidence="2">
    <location>
        <begin position="264"/>
        <end position="310"/>
    </location>
</feature>
<feature type="compositionally biased region" description="Low complexity" evidence="2">
    <location>
        <begin position="270"/>
        <end position="287"/>
    </location>
</feature>
<feature type="compositionally biased region" description="Pro residues" evidence="2">
    <location>
        <begin position="288"/>
        <end position="298"/>
    </location>
</feature>
<protein>
    <recommendedName>
        <fullName evidence="1">Small ribosomal subunit protein uS2</fullName>
    </recommendedName>
    <alternativeName>
        <fullName evidence="3">40S ribosomal protein SA</fullName>
    </alternativeName>
    <alternativeName>
        <fullName>p40</fullName>
    </alternativeName>
</protein>
<evidence type="ECO:0000255" key="1">
    <source>
        <dbReference type="HAMAP-Rule" id="MF_03015"/>
    </source>
</evidence>
<evidence type="ECO:0000256" key="2">
    <source>
        <dbReference type="SAM" id="MobiDB-lite"/>
    </source>
</evidence>
<evidence type="ECO:0000305" key="3"/>
<proteinExistence type="evidence at transcript level"/>
<organism>
    <name type="scientific">Glycine max</name>
    <name type="common">Soybean</name>
    <name type="synonym">Glycine hispida</name>
    <dbReference type="NCBI Taxonomy" id="3847"/>
    <lineage>
        <taxon>Eukaryota</taxon>
        <taxon>Viridiplantae</taxon>
        <taxon>Streptophyta</taxon>
        <taxon>Embryophyta</taxon>
        <taxon>Tracheophyta</taxon>
        <taxon>Spermatophyta</taxon>
        <taxon>Magnoliopsida</taxon>
        <taxon>eudicotyledons</taxon>
        <taxon>Gunneridae</taxon>
        <taxon>Pentapetalae</taxon>
        <taxon>rosids</taxon>
        <taxon>fabids</taxon>
        <taxon>Fabales</taxon>
        <taxon>Fabaceae</taxon>
        <taxon>Papilionoideae</taxon>
        <taxon>50 kb inversion clade</taxon>
        <taxon>NPAAA clade</taxon>
        <taxon>indigoferoid/millettioid clade</taxon>
        <taxon>Phaseoleae</taxon>
        <taxon>Glycine</taxon>
        <taxon>Glycine subgen. Soja</taxon>
    </lineage>
</organism>